<dbReference type="EMBL" id="BA000039">
    <property type="protein sequence ID" value="BAC07640.1"/>
    <property type="molecule type" value="Genomic_DNA"/>
</dbReference>
<dbReference type="RefSeq" id="NP_680878.1">
    <property type="nucleotide sequence ID" value="NC_004113.1"/>
</dbReference>
<dbReference type="RefSeq" id="WP_011055942.1">
    <property type="nucleotide sequence ID" value="NC_004113.1"/>
</dbReference>
<dbReference type="SMR" id="P59187"/>
<dbReference type="STRING" id="197221.gene:10746665"/>
<dbReference type="EnsemblBacteria" id="BAC07640">
    <property type="protein sequence ID" value="BAC07640"/>
    <property type="gene ID" value="BAC07640"/>
</dbReference>
<dbReference type="KEGG" id="tel:tlr0087"/>
<dbReference type="PATRIC" id="fig|197221.4.peg.90"/>
<dbReference type="eggNOG" id="COG0092">
    <property type="taxonomic scope" value="Bacteria"/>
</dbReference>
<dbReference type="Proteomes" id="UP000000440">
    <property type="component" value="Chromosome"/>
</dbReference>
<dbReference type="GO" id="GO:0022627">
    <property type="term" value="C:cytosolic small ribosomal subunit"/>
    <property type="evidence" value="ECO:0007669"/>
    <property type="project" value="TreeGrafter"/>
</dbReference>
<dbReference type="GO" id="GO:0003729">
    <property type="term" value="F:mRNA binding"/>
    <property type="evidence" value="ECO:0007669"/>
    <property type="project" value="UniProtKB-UniRule"/>
</dbReference>
<dbReference type="GO" id="GO:0019843">
    <property type="term" value="F:rRNA binding"/>
    <property type="evidence" value="ECO:0007669"/>
    <property type="project" value="UniProtKB-UniRule"/>
</dbReference>
<dbReference type="GO" id="GO:0003735">
    <property type="term" value="F:structural constituent of ribosome"/>
    <property type="evidence" value="ECO:0007669"/>
    <property type="project" value="InterPro"/>
</dbReference>
<dbReference type="GO" id="GO:0006412">
    <property type="term" value="P:translation"/>
    <property type="evidence" value="ECO:0007669"/>
    <property type="project" value="UniProtKB-UniRule"/>
</dbReference>
<dbReference type="CDD" id="cd02412">
    <property type="entry name" value="KH-II_30S_S3"/>
    <property type="match status" value="1"/>
</dbReference>
<dbReference type="FunFam" id="3.30.300.20:FF:000001">
    <property type="entry name" value="30S ribosomal protein S3"/>
    <property type="match status" value="1"/>
</dbReference>
<dbReference type="Gene3D" id="3.30.300.20">
    <property type="match status" value="1"/>
</dbReference>
<dbReference type="Gene3D" id="3.30.1140.32">
    <property type="entry name" value="Ribosomal protein S3, C-terminal domain"/>
    <property type="match status" value="1"/>
</dbReference>
<dbReference type="HAMAP" id="MF_01309_B">
    <property type="entry name" value="Ribosomal_uS3_B"/>
    <property type="match status" value="1"/>
</dbReference>
<dbReference type="InterPro" id="IPR004087">
    <property type="entry name" value="KH_dom"/>
</dbReference>
<dbReference type="InterPro" id="IPR015946">
    <property type="entry name" value="KH_dom-like_a/b"/>
</dbReference>
<dbReference type="InterPro" id="IPR004044">
    <property type="entry name" value="KH_dom_type_2"/>
</dbReference>
<dbReference type="InterPro" id="IPR009019">
    <property type="entry name" value="KH_sf_prok-type"/>
</dbReference>
<dbReference type="InterPro" id="IPR036419">
    <property type="entry name" value="Ribosomal_S3_C_sf"/>
</dbReference>
<dbReference type="InterPro" id="IPR005704">
    <property type="entry name" value="Ribosomal_uS3_bac-typ"/>
</dbReference>
<dbReference type="InterPro" id="IPR001351">
    <property type="entry name" value="Ribosomal_uS3_C"/>
</dbReference>
<dbReference type="InterPro" id="IPR018280">
    <property type="entry name" value="Ribosomal_uS3_CS"/>
</dbReference>
<dbReference type="NCBIfam" id="TIGR01009">
    <property type="entry name" value="rpsC_bact"/>
    <property type="match status" value="1"/>
</dbReference>
<dbReference type="PANTHER" id="PTHR11760">
    <property type="entry name" value="30S/40S RIBOSOMAL PROTEIN S3"/>
    <property type="match status" value="1"/>
</dbReference>
<dbReference type="PANTHER" id="PTHR11760:SF19">
    <property type="entry name" value="SMALL RIBOSOMAL SUBUNIT PROTEIN US3C"/>
    <property type="match status" value="1"/>
</dbReference>
<dbReference type="Pfam" id="PF07650">
    <property type="entry name" value="KH_2"/>
    <property type="match status" value="1"/>
</dbReference>
<dbReference type="Pfam" id="PF00189">
    <property type="entry name" value="Ribosomal_S3_C"/>
    <property type="match status" value="1"/>
</dbReference>
<dbReference type="SMART" id="SM00322">
    <property type="entry name" value="KH"/>
    <property type="match status" value="1"/>
</dbReference>
<dbReference type="SUPFAM" id="SSF54814">
    <property type="entry name" value="Prokaryotic type KH domain (KH-domain type II)"/>
    <property type="match status" value="1"/>
</dbReference>
<dbReference type="SUPFAM" id="SSF54821">
    <property type="entry name" value="Ribosomal protein S3 C-terminal domain"/>
    <property type="match status" value="1"/>
</dbReference>
<dbReference type="PROSITE" id="PS50823">
    <property type="entry name" value="KH_TYPE_2"/>
    <property type="match status" value="1"/>
</dbReference>
<dbReference type="PROSITE" id="PS00548">
    <property type="entry name" value="RIBOSOMAL_S3"/>
    <property type="match status" value="1"/>
</dbReference>
<keyword id="KW-1185">Reference proteome</keyword>
<keyword id="KW-0687">Ribonucleoprotein</keyword>
<keyword id="KW-0689">Ribosomal protein</keyword>
<keyword id="KW-0694">RNA-binding</keyword>
<keyword id="KW-0699">rRNA-binding</keyword>
<proteinExistence type="inferred from homology"/>
<accession>P59187</accession>
<protein>
    <recommendedName>
        <fullName evidence="1">Small ribosomal subunit protein uS3</fullName>
    </recommendedName>
    <alternativeName>
        <fullName evidence="3">30S ribosomal protein S3</fullName>
    </alternativeName>
</protein>
<name>RS3_THEVB</name>
<evidence type="ECO:0000255" key="1">
    <source>
        <dbReference type="HAMAP-Rule" id="MF_01309"/>
    </source>
</evidence>
<evidence type="ECO:0000256" key="2">
    <source>
        <dbReference type="SAM" id="MobiDB-lite"/>
    </source>
</evidence>
<evidence type="ECO:0000305" key="3"/>
<reference key="1">
    <citation type="journal article" date="2002" name="DNA Res.">
        <title>Complete genome structure of the thermophilic cyanobacterium Thermosynechococcus elongatus BP-1.</title>
        <authorList>
            <person name="Nakamura Y."/>
            <person name="Kaneko T."/>
            <person name="Sato S."/>
            <person name="Ikeuchi M."/>
            <person name="Katoh H."/>
            <person name="Sasamoto S."/>
            <person name="Watanabe A."/>
            <person name="Iriguchi M."/>
            <person name="Kawashima K."/>
            <person name="Kimura T."/>
            <person name="Kishida Y."/>
            <person name="Kiyokawa C."/>
            <person name="Kohara M."/>
            <person name="Matsumoto M."/>
            <person name="Matsuno A."/>
            <person name="Nakazaki N."/>
            <person name="Shimpo S."/>
            <person name="Sugimoto M."/>
            <person name="Takeuchi C."/>
            <person name="Yamada M."/>
            <person name="Tabata S."/>
        </authorList>
    </citation>
    <scope>NUCLEOTIDE SEQUENCE [LARGE SCALE GENOMIC DNA]</scope>
    <source>
        <strain>NIES-2133 / IAM M-273 / BP-1</strain>
    </source>
</reference>
<organism>
    <name type="scientific">Thermosynechococcus vestitus (strain NIES-2133 / IAM M-273 / BP-1)</name>
    <dbReference type="NCBI Taxonomy" id="197221"/>
    <lineage>
        <taxon>Bacteria</taxon>
        <taxon>Bacillati</taxon>
        <taxon>Cyanobacteriota</taxon>
        <taxon>Cyanophyceae</taxon>
        <taxon>Acaryochloridales</taxon>
        <taxon>Thermosynechococcaceae</taxon>
        <taxon>Thermosynechococcus</taxon>
    </lineage>
</organism>
<comment type="function">
    <text evidence="1">Binds the lower part of the 30S subunit head. Binds mRNA in the 70S ribosome, positioning it for translation.</text>
</comment>
<comment type="subunit">
    <text evidence="1">Part of the 30S ribosomal subunit. Forms a tight complex with proteins S10 and S14.</text>
</comment>
<comment type="similarity">
    <text evidence="1">Belongs to the universal ribosomal protein uS3 family.</text>
</comment>
<feature type="chain" id="PRO_0000130217" description="Small ribosomal subunit protein uS3">
    <location>
        <begin position="1"/>
        <end position="238"/>
    </location>
</feature>
<feature type="domain" description="KH type-2" evidence="1">
    <location>
        <begin position="39"/>
        <end position="109"/>
    </location>
</feature>
<feature type="region of interest" description="Disordered" evidence="2">
    <location>
        <begin position="215"/>
        <end position="238"/>
    </location>
</feature>
<sequence>MGQKIHPIGFRLGITQDHRSRWYADSDRYPELLQEDHRIRTFINQQLANAGIAEVRIERKADQVELQIRTARPGVVVGKGGQGIEELRKQLRQMLPANRTIKVNVVEVNRVDAEASLLAEYITQQLERRVAFRRAVRQAIQRAQRAGIEGIKVQVAGRLNGAEIARTEWTREGRVPLHTLRADIDYAYRTARTIYGILGVKVWIFKGEVLPGQTEAVPREATRRSPQRRLPQFENRSN</sequence>
<gene>
    <name evidence="1" type="primary">rpsC</name>
    <name evidence="1" type="synonym">rps3</name>
    <name type="ordered locus">tlr0087</name>
</gene>